<gene>
    <name evidence="7 10" type="primary">SELENOT</name>
    <name evidence="7" type="synonym">SELT</name>
    <name evidence="9" type="ORF">UNQ150/PRO176</name>
</gene>
<organism>
    <name type="scientific">Homo sapiens</name>
    <name type="common">Human</name>
    <dbReference type="NCBI Taxonomy" id="9606"/>
    <lineage>
        <taxon>Eukaryota</taxon>
        <taxon>Metazoa</taxon>
        <taxon>Chordata</taxon>
        <taxon>Craniata</taxon>
        <taxon>Vertebrata</taxon>
        <taxon>Euteleostomi</taxon>
        <taxon>Mammalia</taxon>
        <taxon>Eutheria</taxon>
        <taxon>Euarchontoglires</taxon>
        <taxon>Primates</taxon>
        <taxon>Haplorrhini</taxon>
        <taxon>Catarrhini</taxon>
        <taxon>Hominidae</taxon>
        <taxon>Homo</taxon>
    </lineage>
</organism>
<reference key="1">
    <citation type="journal article" date="1999" name="J. Biol. Chem.">
        <title>New mammalian selenocysteine-containing proteins identified with an algorithm that searches for selenocysteine insertion sequence elements.</title>
        <authorList>
            <person name="Kryukov G.V."/>
            <person name="Kryukov V.M."/>
            <person name="Gladyshev V.N."/>
        </authorList>
    </citation>
    <scope>NUCLEOTIDE SEQUENCE [MRNA]</scope>
</reference>
<reference key="2">
    <citation type="submission" date="1999-02" db="EMBL/GenBank/DDBJ databases">
        <authorList>
            <person name="Mei G."/>
            <person name="Yu W."/>
            <person name="Gibbs R.A."/>
        </authorList>
    </citation>
    <scope>NUCLEOTIDE SEQUENCE [LARGE SCALE MRNA]</scope>
    <source>
        <tissue>Brain</tissue>
    </source>
</reference>
<reference key="3">
    <citation type="journal article" date="2003" name="Genome Res.">
        <title>The secreted protein discovery initiative (SPDI), a large-scale effort to identify novel human secreted and transmembrane proteins: a bioinformatics assessment.</title>
        <authorList>
            <person name="Clark H.F."/>
            <person name="Gurney A.L."/>
            <person name="Abaya E."/>
            <person name="Baker K."/>
            <person name="Baldwin D.T."/>
            <person name="Brush J."/>
            <person name="Chen J."/>
            <person name="Chow B."/>
            <person name="Chui C."/>
            <person name="Crowley C."/>
            <person name="Currell B."/>
            <person name="Deuel B."/>
            <person name="Dowd P."/>
            <person name="Eaton D."/>
            <person name="Foster J.S."/>
            <person name="Grimaldi C."/>
            <person name="Gu Q."/>
            <person name="Hass P.E."/>
            <person name="Heldens S."/>
            <person name="Huang A."/>
            <person name="Kim H.S."/>
            <person name="Klimowski L."/>
            <person name="Jin Y."/>
            <person name="Johnson S."/>
            <person name="Lee J."/>
            <person name="Lewis L."/>
            <person name="Liao D."/>
            <person name="Mark M.R."/>
            <person name="Robbie E."/>
            <person name="Sanchez C."/>
            <person name="Schoenfeld J."/>
            <person name="Seshagiri S."/>
            <person name="Simmons L."/>
            <person name="Singh J."/>
            <person name="Smith V."/>
            <person name="Stinson J."/>
            <person name="Vagts A."/>
            <person name="Vandlen R.L."/>
            <person name="Watanabe C."/>
            <person name="Wieand D."/>
            <person name="Woods K."/>
            <person name="Xie M.-H."/>
            <person name="Yansura D.G."/>
            <person name="Yi S."/>
            <person name="Yu G."/>
            <person name="Yuan J."/>
            <person name="Zhang M."/>
            <person name="Zhang Z."/>
            <person name="Goddard A.D."/>
            <person name="Wood W.I."/>
            <person name="Godowski P.J."/>
            <person name="Gray A.M."/>
        </authorList>
    </citation>
    <scope>NUCLEOTIDE SEQUENCE [LARGE SCALE MRNA]</scope>
</reference>
<reference key="4">
    <citation type="journal article" date="2004" name="Genome Res.">
        <title>The status, quality, and expansion of the NIH full-length cDNA project: the Mammalian Gene Collection (MGC).</title>
        <authorList>
            <consortium name="The MGC Project Team"/>
        </authorList>
    </citation>
    <scope>NUCLEOTIDE SEQUENCE [LARGE SCALE MRNA]</scope>
    <source>
        <tissue>Bone marrow</tissue>
        <tissue>Brain</tissue>
        <tissue>Pancreas</tissue>
        <tissue>Skin</tissue>
        <tissue>Urinary bladder</tissue>
    </source>
</reference>
<reference key="5">
    <citation type="journal article" date="2013" name="Endocrinology">
        <title>The PACAP-regulated gene selenoprotein T is abundantly expressed in mouse and human beta-cells and its targeted inactivation impairs glucose tolerance.</title>
        <authorList>
            <person name="Prevost G."/>
            <person name="Arabo A."/>
            <person name="Jian L."/>
            <person name="Quelennec E."/>
            <person name="Cartier D."/>
            <person name="Hassan S."/>
            <person name="Falluel-Morel A."/>
            <person name="Tanguy Y."/>
            <person name="Gargani S."/>
            <person name="Lihrmann I."/>
            <person name="Kerr-Conte J."/>
            <person name="Lefebvre H."/>
            <person name="Pattou F."/>
            <person name="Anouar Y."/>
        </authorList>
    </citation>
    <scope>TISSUE SPECIFICITY</scope>
</reference>
<reference key="6">
    <citation type="journal article" date="2014" name="J. Proteomics">
        <title>An enzyme assisted RP-RPLC approach for in-depth analysis of human liver phosphoproteome.</title>
        <authorList>
            <person name="Bian Y."/>
            <person name="Song C."/>
            <person name="Cheng K."/>
            <person name="Dong M."/>
            <person name="Wang F."/>
            <person name="Huang J."/>
            <person name="Sun D."/>
            <person name="Wang L."/>
            <person name="Ye M."/>
            <person name="Zou H."/>
        </authorList>
    </citation>
    <scope>IDENTIFICATION BY MASS SPECTROMETRY [LARGE SCALE ANALYSIS]</scope>
    <source>
        <tissue>Liver</tissue>
    </source>
</reference>
<reference key="7">
    <citation type="journal article" date="2016" name="Antioxid. Redox Signal.">
        <title>Selenoprotein T exerts an essential oxidoreductase activity that protects dopaminergic neurons in mouse models of Parkinson's Disease.</title>
        <authorList>
            <person name="Boukhzar L."/>
            <person name="Hamieh A."/>
            <person name="Cartier D."/>
            <person name="Tanguy Y."/>
            <person name="Alsharif I."/>
            <person name="Castex M."/>
            <person name="Arabo A."/>
            <person name="El Hajji S."/>
            <person name="Bonnet J.J."/>
            <person name="Errami M."/>
            <person name="Falluel-Morel A."/>
            <person name="Chagraoui A."/>
            <person name="Lihrmann I."/>
            <person name="Anouar Y."/>
        </authorList>
    </citation>
    <scope>FUNCTION</scope>
    <scope>INDUCTION BY NEUROTOXINS</scope>
    <scope>MUTAGENESIS OF SEC-49</scope>
    <scope>INVOLVEMENT IN DISEASE</scope>
</reference>
<reference key="8">
    <citation type="journal article" date="2016" name="J. Biol. Chem.">
        <title>Selenoprotein gene nomenclature.</title>
        <authorList>
            <person name="Gladyshev V.N."/>
            <person name="Arner E.S."/>
            <person name="Berry M.J."/>
            <person name="Brigelius-Flohe R."/>
            <person name="Bruford E.A."/>
            <person name="Burk R.F."/>
            <person name="Carlson B.A."/>
            <person name="Castellano S."/>
            <person name="Chavatte L."/>
            <person name="Conrad M."/>
            <person name="Copeland P.R."/>
            <person name="Diamond A.M."/>
            <person name="Driscoll D.M."/>
            <person name="Ferreiro A."/>
            <person name="Flohe L."/>
            <person name="Green F.R."/>
            <person name="Guigo R."/>
            <person name="Handy D.E."/>
            <person name="Hatfield D.L."/>
            <person name="Hesketh J."/>
            <person name="Hoffmann P.R."/>
            <person name="Holmgren A."/>
            <person name="Hondal R.J."/>
            <person name="Howard M.T."/>
            <person name="Huang K."/>
            <person name="Kim H.Y."/>
            <person name="Kim I.Y."/>
            <person name="Koehrle J."/>
            <person name="Krol A."/>
            <person name="Kryukov G.V."/>
            <person name="Lee B.J."/>
            <person name="Lee B.C."/>
            <person name="Lei X.G."/>
            <person name="Liu Q."/>
            <person name="Lescure A."/>
            <person name="Lobanov A.V."/>
            <person name="Loscalzo J."/>
            <person name="Maiorino M."/>
            <person name="Mariotti M."/>
            <person name="Sandeep Prabhu K."/>
            <person name="Rayman M.P."/>
            <person name="Rozovsky S."/>
            <person name="Salinas G."/>
            <person name="Schmidt E.E."/>
            <person name="Schomburg L."/>
            <person name="Schweizer U."/>
            <person name="Simonovic M."/>
            <person name="Sunde R.A."/>
            <person name="Tsuji P.A."/>
            <person name="Tweedie S."/>
            <person name="Ursini F."/>
            <person name="Whanger P.D."/>
            <person name="Zhang Y."/>
        </authorList>
    </citation>
    <scope>NOMENCLATURE</scope>
</reference>
<protein>
    <recommendedName>
        <fullName evidence="8">Thioredoxin reductase-like selenoprotein T</fullName>
        <shortName evidence="7">SelT</shortName>
        <ecNumber evidence="3">1.8.1.9</ecNumber>
    </recommendedName>
</protein>
<keyword id="KW-0256">Endoplasmic reticulum</keyword>
<keyword id="KW-0472">Membrane</keyword>
<keyword id="KW-0521">NADP</keyword>
<keyword id="KW-0560">Oxidoreductase</keyword>
<keyword id="KW-1267">Proteomics identification</keyword>
<keyword id="KW-0676">Redox-active center</keyword>
<keyword id="KW-1185">Reference proteome</keyword>
<keyword id="KW-0712">Selenocysteine</keyword>
<keyword id="KW-0732">Signal</keyword>
<keyword id="KW-0812">Transmembrane</keyword>
<keyword id="KW-1133">Transmembrane helix</keyword>
<dbReference type="EC" id="1.8.1.9" evidence="3"/>
<dbReference type="EMBL" id="AF195141">
    <property type="protein sequence ID" value="AAF13696.1"/>
    <property type="status" value="ALT_FRAME"/>
    <property type="molecule type" value="mRNA"/>
</dbReference>
<dbReference type="EMBL" id="AF131856">
    <property type="protein sequence ID" value="AAD20063.1"/>
    <property type="status" value="ALT_SEQ"/>
    <property type="molecule type" value="mRNA"/>
</dbReference>
<dbReference type="EMBL" id="AY358095">
    <property type="protein sequence ID" value="AAQ88462.1"/>
    <property type="status" value="ALT_SEQ"/>
    <property type="molecule type" value="mRNA"/>
</dbReference>
<dbReference type="EMBL" id="AY358096">
    <property type="protein sequence ID" value="AAQ88463.1"/>
    <property type="status" value="ALT_SEQ"/>
    <property type="molecule type" value="mRNA"/>
</dbReference>
<dbReference type="EMBL" id="BC006012">
    <property type="protein sequence ID" value="AAH06012.2"/>
    <property type="molecule type" value="mRNA"/>
</dbReference>
<dbReference type="EMBL" id="BC008411">
    <property type="protein sequence ID" value="AAH08411.2"/>
    <property type="molecule type" value="mRNA"/>
</dbReference>
<dbReference type="EMBL" id="BC009556">
    <property type="protein sequence ID" value="AAH09556.2"/>
    <property type="molecule type" value="mRNA"/>
</dbReference>
<dbReference type="EMBL" id="BC009611">
    <property type="protein sequence ID" value="AAH09611.2"/>
    <property type="molecule type" value="mRNA"/>
</dbReference>
<dbReference type="EMBL" id="BC026350">
    <property type="protein sequence ID" value="AAH26350.2"/>
    <property type="molecule type" value="mRNA"/>
</dbReference>
<dbReference type="EMBL" id="BC036738">
    <property type="protein sequence ID" value="AAH36738.3"/>
    <property type="molecule type" value="mRNA"/>
</dbReference>
<dbReference type="EMBL" id="BC071699">
    <property type="protein sequence ID" value="AAH71699.1"/>
    <property type="molecule type" value="mRNA"/>
</dbReference>
<dbReference type="CCDS" id="CCDS46936.1"/>
<dbReference type="RefSeq" id="NP_057359.2">
    <property type="nucleotide sequence ID" value="NM_016275.3"/>
</dbReference>
<dbReference type="BioGRID" id="119693">
    <property type="interactions" value="48"/>
</dbReference>
<dbReference type="FunCoup" id="P62341">
    <property type="interactions" value="1740"/>
</dbReference>
<dbReference type="IntAct" id="P62341">
    <property type="interactions" value="37"/>
</dbReference>
<dbReference type="MINT" id="P62341"/>
<dbReference type="STRING" id="9606.ENSP00000418910"/>
<dbReference type="iPTMnet" id="P62341"/>
<dbReference type="PhosphoSitePlus" id="P62341"/>
<dbReference type="SwissPalm" id="P62341"/>
<dbReference type="BioMuta" id="SELENOT"/>
<dbReference type="DMDM" id="190358765"/>
<dbReference type="jPOST" id="P62341"/>
<dbReference type="MassIVE" id="P62341"/>
<dbReference type="PaxDb" id="9606-ENSP00000418910"/>
<dbReference type="PeptideAtlas" id="P62341"/>
<dbReference type="ProteomicsDB" id="57398"/>
<dbReference type="Pumba" id="P62341"/>
<dbReference type="Antibodypedia" id="48150">
    <property type="antibodies" value="63 antibodies from 15 providers"/>
</dbReference>
<dbReference type="DNASU" id="51714"/>
<dbReference type="Ensembl" id="ENST00000471696.6">
    <property type="protein sequence ID" value="ENSP00000418910.1"/>
    <property type="gene ID" value="ENSG00000198843.14"/>
</dbReference>
<dbReference type="GeneID" id="51714"/>
<dbReference type="KEGG" id="hsa:51714"/>
<dbReference type="MANE-Select" id="ENST00000471696.6">
    <property type="protein sequence ID" value="ENSP00000418910.1"/>
    <property type="RefSeq nucleotide sequence ID" value="NM_016275.5"/>
    <property type="RefSeq protein sequence ID" value="NP_057359.2"/>
</dbReference>
<dbReference type="AGR" id="HGNC:18136"/>
<dbReference type="CTD" id="51714"/>
<dbReference type="DisGeNET" id="51714"/>
<dbReference type="GeneCards" id="SELENOT"/>
<dbReference type="HGNC" id="HGNC:18136">
    <property type="gene designation" value="SELENOT"/>
</dbReference>
<dbReference type="HPA" id="ENSG00000198843">
    <property type="expression patterns" value="Low tissue specificity"/>
</dbReference>
<dbReference type="MIM" id="607912">
    <property type="type" value="gene"/>
</dbReference>
<dbReference type="neXtProt" id="NX_P62341"/>
<dbReference type="OpenTargets" id="ENSG00000198843"/>
<dbReference type="VEuPathDB" id="HostDB:ENSG00000198843"/>
<dbReference type="eggNOG" id="KOG3286">
    <property type="taxonomic scope" value="Eukaryota"/>
</dbReference>
<dbReference type="GeneTree" id="ENSGT00390000011725"/>
<dbReference type="InParanoid" id="P62341"/>
<dbReference type="OMA" id="LKFQICC"/>
<dbReference type="OrthoDB" id="60822at2759"/>
<dbReference type="PAN-GO" id="P62341">
    <property type="GO annotations" value="3 GO annotations based on evolutionary models"/>
</dbReference>
<dbReference type="PhylomeDB" id="P62341"/>
<dbReference type="PathwayCommons" id="P62341"/>
<dbReference type="SignaLink" id="P62341"/>
<dbReference type="BioGRID-ORCS" id="51714">
    <property type="hits" value="17 hits in 1110 CRISPR screens"/>
</dbReference>
<dbReference type="ChiTaRS" id="SELENOT">
    <property type="organism name" value="human"/>
</dbReference>
<dbReference type="GeneWiki" id="SELT"/>
<dbReference type="GenomeRNAi" id="51714"/>
<dbReference type="Pharos" id="P62341">
    <property type="development level" value="Tbio"/>
</dbReference>
<dbReference type="PRO" id="PR:P62341"/>
<dbReference type="Proteomes" id="UP000005640">
    <property type="component" value="Chromosome 3"/>
</dbReference>
<dbReference type="RNAct" id="P62341">
    <property type="molecule type" value="protein"/>
</dbReference>
<dbReference type="Bgee" id="ENSG00000198843">
    <property type="expression patterns" value="Expressed in islet of Langerhans and 202 other cell types or tissues"/>
</dbReference>
<dbReference type="ExpressionAtlas" id="P62341">
    <property type="expression patterns" value="baseline and differential"/>
</dbReference>
<dbReference type="GO" id="GO:0005783">
    <property type="term" value="C:endoplasmic reticulum"/>
    <property type="evidence" value="ECO:0000250"/>
    <property type="project" value="UniProtKB"/>
</dbReference>
<dbReference type="GO" id="GO:0005789">
    <property type="term" value="C:endoplasmic reticulum membrane"/>
    <property type="evidence" value="ECO:0000250"/>
    <property type="project" value="UniProtKB"/>
</dbReference>
<dbReference type="GO" id="GO:0008430">
    <property type="term" value="F:selenium binding"/>
    <property type="evidence" value="ECO:0000303"/>
    <property type="project" value="UniProtKB"/>
</dbReference>
<dbReference type="GO" id="GO:0004791">
    <property type="term" value="F:thioredoxin-disulfide reductase (NADPH) activity"/>
    <property type="evidence" value="ECO:0000250"/>
    <property type="project" value="UniProtKB"/>
</dbReference>
<dbReference type="GO" id="GO:0045454">
    <property type="term" value="P:cell redox homeostasis"/>
    <property type="evidence" value="ECO:0000314"/>
    <property type="project" value="UniProtKB"/>
</dbReference>
<dbReference type="GO" id="GO:0098869">
    <property type="term" value="P:cellular oxidant detoxification"/>
    <property type="evidence" value="ECO:0000250"/>
    <property type="project" value="UniProtKB"/>
</dbReference>
<dbReference type="GO" id="GO:0042593">
    <property type="term" value="P:glucose homeostasis"/>
    <property type="evidence" value="ECO:0000250"/>
    <property type="project" value="UniProtKB"/>
</dbReference>
<dbReference type="GO" id="GO:0035773">
    <property type="term" value="P:insulin secretion involved in cellular response to glucose stimulus"/>
    <property type="evidence" value="ECO:0000250"/>
    <property type="project" value="UniProtKB"/>
</dbReference>
<dbReference type="GO" id="GO:0031016">
    <property type="term" value="P:pancreas development"/>
    <property type="evidence" value="ECO:0000250"/>
    <property type="project" value="UniProtKB"/>
</dbReference>
<dbReference type="GO" id="GO:0007204">
    <property type="term" value="P:positive regulation of cytosolic calcium ion concentration"/>
    <property type="evidence" value="ECO:0000250"/>
    <property type="project" value="UniProtKB"/>
</dbReference>
<dbReference type="GO" id="GO:0060124">
    <property type="term" value="P:positive regulation of growth hormone secretion"/>
    <property type="evidence" value="ECO:0000250"/>
    <property type="project" value="UniProtKB"/>
</dbReference>
<dbReference type="GO" id="GO:0009749">
    <property type="term" value="P:response to glucose"/>
    <property type="evidence" value="ECO:0000250"/>
    <property type="project" value="UniProtKB"/>
</dbReference>
<dbReference type="GO" id="GO:0001514">
    <property type="term" value="P:selenocysteine incorporation"/>
    <property type="evidence" value="ECO:0000303"/>
    <property type="project" value="UniProtKB"/>
</dbReference>
<dbReference type="FunFam" id="3.40.30.10:FF:000085">
    <property type="entry name" value="Selenoprotein T"/>
    <property type="match status" value="1"/>
</dbReference>
<dbReference type="Gene3D" id="3.40.30.10">
    <property type="entry name" value="Glutaredoxin"/>
    <property type="match status" value="1"/>
</dbReference>
<dbReference type="InterPro" id="IPR011893">
    <property type="entry name" value="Selenoprotein_Rdx-typ"/>
</dbReference>
<dbReference type="InterPro" id="IPR019389">
    <property type="entry name" value="Selenoprotein_T"/>
</dbReference>
<dbReference type="InterPro" id="IPR036249">
    <property type="entry name" value="Thioredoxin-like_sf"/>
</dbReference>
<dbReference type="NCBIfam" id="TIGR02174">
    <property type="entry name" value="CXXU_selWTH"/>
    <property type="match status" value="1"/>
</dbReference>
<dbReference type="PANTHER" id="PTHR13544">
    <property type="entry name" value="SELENOPROTEIN T"/>
    <property type="match status" value="1"/>
</dbReference>
<dbReference type="PANTHER" id="PTHR13544:SF0">
    <property type="entry name" value="THIOREDOXIN REDUCTASE-LIKE SELENOPROTEIN T"/>
    <property type="match status" value="1"/>
</dbReference>
<dbReference type="Pfam" id="PF10262">
    <property type="entry name" value="Rdx"/>
    <property type="match status" value="1"/>
</dbReference>
<dbReference type="SUPFAM" id="SSF52833">
    <property type="entry name" value="Thioredoxin-like"/>
    <property type="match status" value="1"/>
</dbReference>
<comment type="function">
    <text evidence="2 3 6">Selenoprotein with thioredoxin reductase-like oxidoreductase activity (By similarity). Protects dopaminergic neurons against oxidative stress and cell death (PubMed:26866473). Involved in ADCYAP1/PACAP-induced calcium mobilization and neuroendocrine secretion (By similarity). Plays a role in fibroblast anchorage and redox regulation (By similarity). In gastric smooth muscle, modulates the contraction processes through the regulation of calcium release and MYLK activation (By similarity). In pancreatic islets, involved in the control of glucose homeostasis, contributes to prolonged ADCYAP1/PACAP-induced insulin secretion (By similarity).</text>
</comment>
<comment type="catalytic activity">
    <reaction evidence="3">
        <text>[thioredoxin]-dithiol + NADP(+) = [thioredoxin]-disulfide + NADPH + H(+)</text>
        <dbReference type="Rhea" id="RHEA:20345"/>
        <dbReference type="Rhea" id="RHEA-COMP:10698"/>
        <dbReference type="Rhea" id="RHEA-COMP:10700"/>
        <dbReference type="ChEBI" id="CHEBI:15378"/>
        <dbReference type="ChEBI" id="CHEBI:29950"/>
        <dbReference type="ChEBI" id="CHEBI:50058"/>
        <dbReference type="ChEBI" id="CHEBI:57783"/>
        <dbReference type="ChEBI" id="CHEBI:58349"/>
        <dbReference type="EC" id="1.8.1.9"/>
    </reaction>
</comment>
<comment type="subcellular location">
    <subcellularLocation>
        <location evidence="3">Endoplasmic reticulum membrane</location>
        <topology evidence="4">Single-pass membrane protein</topology>
    </subcellularLocation>
</comment>
<comment type="tissue specificity">
    <text evidence="5">Ubiquitous. Highly expressed in the endocrine pancreas.</text>
</comment>
<comment type="induction">
    <text evidence="6">Induced by Parkinson disease-inducing neurotoxins such as 1-methyl-4-phenyl-1,2,3,6-tetrahydropyridine (MPTP).</text>
</comment>
<comment type="PTM">
    <text evidence="1">May contain a selenide-sulfide bond between Cys-46 and Sec-49. This bond is speculated to serve as redox-active pair (By similarity).</text>
</comment>
<comment type="disease">
    <text evidence="6">mRNA levels are increased more than 200-folds in the caudate putamen from Parkinson disease (PD) patients compared to control subjects. In conditional brain knockout mice, treatment with PD-inducing neurotoxins provoke rapid and severe parkinsonian-like motor defects.</text>
</comment>
<comment type="similarity">
    <text evidence="8">Belongs to the SelWTH family. Selenoprotein T subfamily.</text>
</comment>
<comment type="sequence caution" evidence="8">
    <conflict type="erroneous termination">
        <sequence resource="EMBL-CDS" id="AAD20063"/>
    </conflict>
    <text>Truncated C-terminus.</text>
</comment>
<comment type="sequence caution" evidence="8">
    <conflict type="frameshift">
        <sequence resource="EMBL-CDS" id="AAF13696"/>
    </conflict>
</comment>
<comment type="sequence caution" evidence="8">
    <conflict type="erroneous termination">
        <sequence resource="EMBL-CDS" id="AAQ88462"/>
    </conflict>
    <text>Truncated C-terminus.</text>
</comment>
<comment type="sequence caution" evidence="8">
    <conflict type="erroneous termination">
        <sequence resource="EMBL-CDS" id="AAQ88463"/>
    </conflict>
    <text>Truncated C-terminus.</text>
</comment>
<feature type="signal peptide" evidence="4">
    <location>
        <begin position="1"/>
        <end position="19"/>
    </location>
</feature>
<feature type="chain" id="PRO_0000032290" description="Thioredoxin reductase-like selenoprotein T">
    <location>
        <begin position="20"/>
        <end position="195"/>
    </location>
</feature>
<feature type="transmembrane region" description="Helical" evidence="4">
    <location>
        <begin position="85"/>
        <end position="103"/>
    </location>
</feature>
<feature type="non-standard amino acid" description="Selenocysteine">
    <location>
        <position position="49"/>
    </location>
</feature>
<feature type="cross-link" description="Cysteinyl-selenocysteine (Cys-Sec)" evidence="4">
    <location>
        <begin position="46"/>
        <end position="49"/>
    </location>
</feature>
<feature type="mutagenesis site" description="Increases ROS levels induced by neurotoxins." evidence="6">
    <original>U</original>
    <variation>S</variation>
    <location>
        <position position="49"/>
    </location>
</feature>
<feature type="sequence conflict" description="In Ref. 4; AAH09611." evidence="8" ref="4">
    <original>RSE</original>
    <variation>WSD</variation>
    <location>
        <begin position="16"/>
        <end position="18"/>
    </location>
</feature>
<feature type="sequence conflict" description="In Ref. 4; AAH09611." evidence="8" ref="4">
    <original>V</original>
    <variation>M</variation>
    <location>
        <position position="26"/>
    </location>
</feature>
<proteinExistence type="evidence at protein level"/>
<sequence>MRLLLLLLVAASAMVRSEASANLGGVPSKRLKMQYATGPLLKFQICVSUGYRRVFEEYMRVISQRYPDIRIEGENYLPQPIYRHIASFLSVFKLVLIGLIIVGKDPFAFFGMQAPSIWQWGQENKVYACMMVFFLSNMIENQCMSTGAFEITLNDVPVWSKLESGHLPSMQQLVQILDNEMKLNVHMDSIPHHRS</sequence>
<evidence type="ECO:0000250" key="1"/>
<evidence type="ECO:0000250" key="2">
    <source>
        <dbReference type="UniProtKB" id="P62342"/>
    </source>
</evidence>
<evidence type="ECO:0000250" key="3">
    <source>
        <dbReference type="UniProtKB" id="Q1H5H1"/>
    </source>
</evidence>
<evidence type="ECO:0000255" key="4"/>
<evidence type="ECO:0000269" key="5">
    <source>
    </source>
</evidence>
<evidence type="ECO:0000269" key="6">
    <source>
    </source>
</evidence>
<evidence type="ECO:0000303" key="7">
    <source>
    </source>
</evidence>
<evidence type="ECO:0000305" key="8"/>
<evidence type="ECO:0000312" key="9">
    <source>
        <dbReference type="EMBL" id="AAQ88462.1"/>
    </source>
</evidence>
<evidence type="ECO:0000312" key="10">
    <source>
        <dbReference type="HGNC" id="HGNC:18136"/>
    </source>
</evidence>
<accession>P62341</accession>
<accession>O95904</accession>
<accession>Q8IY80</accession>
<accession>Q9CZ45</accession>
<accession>Q9NZJ3</accession>
<name>SELT_HUMAN</name>